<evidence type="ECO:0000250" key="1"/>
<evidence type="ECO:0000255" key="2">
    <source>
        <dbReference type="HAMAP-Rule" id="MF_00403"/>
    </source>
</evidence>
<evidence type="ECO:0000256" key="3">
    <source>
        <dbReference type="SAM" id="MobiDB-lite"/>
    </source>
</evidence>
<evidence type="ECO:0000305" key="4"/>
<name>RS12_UREP2</name>
<gene>
    <name evidence="2" type="primary">rpsL</name>
    <name type="ordered locus">UPA3_0562</name>
</gene>
<organism>
    <name type="scientific">Ureaplasma parvum serovar 3 (strain ATCC 27815 / 27 / NCTC 11736)</name>
    <dbReference type="NCBI Taxonomy" id="505682"/>
    <lineage>
        <taxon>Bacteria</taxon>
        <taxon>Bacillati</taxon>
        <taxon>Mycoplasmatota</taxon>
        <taxon>Mycoplasmoidales</taxon>
        <taxon>Mycoplasmoidaceae</taxon>
        <taxon>Ureaplasma</taxon>
    </lineage>
</organism>
<protein>
    <recommendedName>
        <fullName evidence="2">Small ribosomal subunit protein uS12</fullName>
    </recommendedName>
    <alternativeName>
        <fullName evidence="4">30S ribosomal protein S12</fullName>
    </alternativeName>
</protein>
<comment type="function">
    <text evidence="2">With S4 and S5 plays an important role in translational accuracy.</text>
</comment>
<comment type="function">
    <text evidence="2">Interacts with and stabilizes bases of the 16S rRNA that are involved in tRNA selection in the A site and with the mRNA backbone. Located at the interface of the 30S and 50S subunits, it traverses the body of the 30S subunit contacting proteins on the other side and probably holding the rRNA structure together. The combined cluster of proteins S8, S12 and S17 appears to hold together the shoulder and platform of the 30S subunit.</text>
</comment>
<comment type="subunit">
    <text evidence="2">Part of the 30S ribosomal subunit. Contacts proteins S8 and S17. May interact with IF1 in the 30S initiation complex.</text>
</comment>
<comment type="similarity">
    <text evidence="2">Belongs to the universal ribosomal protein uS12 family.</text>
</comment>
<proteinExistence type="inferred from homology"/>
<accession>B1AJG6</accession>
<reference key="1">
    <citation type="submission" date="2008-02" db="EMBL/GenBank/DDBJ databases">
        <title>Genome sequence of Ureaplasma parvum serovar 3.</title>
        <authorList>
            <person name="Methe B.A."/>
            <person name="Glass J."/>
            <person name="Waites K."/>
            <person name="Shrivastava S."/>
        </authorList>
    </citation>
    <scope>NUCLEOTIDE SEQUENCE [LARGE SCALE GENOMIC DNA]</scope>
    <source>
        <strain>ATCC 27815 / 27 / NCTC 11736</strain>
    </source>
</reference>
<dbReference type="EMBL" id="CP000942">
    <property type="protein sequence ID" value="ACA33230.1"/>
    <property type="molecule type" value="Genomic_DNA"/>
</dbReference>
<dbReference type="RefSeq" id="WP_004026220.1">
    <property type="nucleotide sequence ID" value="NC_010503.1"/>
</dbReference>
<dbReference type="SMR" id="B1AJG6"/>
<dbReference type="GeneID" id="93849074"/>
<dbReference type="KEGG" id="upa:UPA3_0562"/>
<dbReference type="HOGENOM" id="CLU_104295_1_2_14"/>
<dbReference type="Proteomes" id="UP000002162">
    <property type="component" value="Chromosome"/>
</dbReference>
<dbReference type="GO" id="GO:0015935">
    <property type="term" value="C:small ribosomal subunit"/>
    <property type="evidence" value="ECO:0007669"/>
    <property type="project" value="InterPro"/>
</dbReference>
<dbReference type="GO" id="GO:0019843">
    <property type="term" value="F:rRNA binding"/>
    <property type="evidence" value="ECO:0007669"/>
    <property type="project" value="UniProtKB-UniRule"/>
</dbReference>
<dbReference type="GO" id="GO:0003735">
    <property type="term" value="F:structural constituent of ribosome"/>
    <property type="evidence" value="ECO:0007669"/>
    <property type="project" value="InterPro"/>
</dbReference>
<dbReference type="GO" id="GO:0000049">
    <property type="term" value="F:tRNA binding"/>
    <property type="evidence" value="ECO:0007669"/>
    <property type="project" value="UniProtKB-UniRule"/>
</dbReference>
<dbReference type="GO" id="GO:0006412">
    <property type="term" value="P:translation"/>
    <property type="evidence" value="ECO:0007669"/>
    <property type="project" value="UniProtKB-UniRule"/>
</dbReference>
<dbReference type="CDD" id="cd03368">
    <property type="entry name" value="Ribosomal_S12"/>
    <property type="match status" value="1"/>
</dbReference>
<dbReference type="FunFam" id="2.40.50.140:FF:000099">
    <property type="entry name" value="Ribosomal protein S12, mitochondrial"/>
    <property type="match status" value="1"/>
</dbReference>
<dbReference type="Gene3D" id="2.40.50.140">
    <property type="entry name" value="Nucleic acid-binding proteins"/>
    <property type="match status" value="1"/>
</dbReference>
<dbReference type="HAMAP" id="MF_00403_B">
    <property type="entry name" value="Ribosomal_uS12_B"/>
    <property type="match status" value="1"/>
</dbReference>
<dbReference type="InterPro" id="IPR012340">
    <property type="entry name" value="NA-bd_OB-fold"/>
</dbReference>
<dbReference type="InterPro" id="IPR006032">
    <property type="entry name" value="Ribosomal_uS12"/>
</dbReference>
<dbReference type="InterPro" id="IPR005679">
    <property type="entry name" value="Ribosomal_uS12_bac"/>
</dbReference>
<dbReference type="NCBIfam" id="TIGR00981">
    <property type="entry name" value="rpsL_bact"/>
    <property type="match status" value="1"/>
</dbReference>
<dbReference type="PANTHER" id="PTHR11652">
    <property type="entry name" value="30S RIBOSOMAL PROTEIN S12 FAMILY MEMBER"/>
    <property type="match status" value="1"/>
</dbReference>
<dbReference type="Pfam" id="PF00164">
    <property type="entry name" value="Ribosom_S12_S23"/>
    <property type="match status" value="1"/>
</dbReference>
<dbReference type="PIRSF" id="PIRSF002133">
    <property type="entry name" value="Ribosomal_S12/S23"/>
    <property type="match status" value="1"/>
</dbReference>
<dbReference type="PRINTS" id="PR01034">
    <property type="entry name" value="RIBOSOMALS12"/>
</dbReference>
<dbReference type="SUPFAM" id="SSF50249">
    <property type="entry name" value="Nucleic acid-binding proteins"/>
    <property type="match status" value="1"/>
</dbReference>
<dbReference type="PROSITE" id="PS00055">
    <property type="entry name" value="RIBOSOMAL_S12"/>
    <property type="match status" value="1"/>
</dbReference>
<sequence length="141" mass="15627">MPTIAQLIRNKRAPKVKKTKSPALLFTYNSLHKKTTKNPSPLKSGVCTRVGTMTPKKPNSALRKYAKVRLSNGFEVLAYIPGEGHNLQEHSVVVIRGGRVKDLPGVRYHIVRGAGDASGVEKRRQQRSLYGAKRPKKEASK</sequence>
<keyword id="KW-0488">Methylation</keyword>
<keyword id="KW-0687">Ribonucleoprotein</keyword>
<keyword id="KW-0689">Ribosomal protein</keyword>
<keyword id="KW-0694">RNA-binding</keyword>
<keyword id="KW-0699">rRNA-binding</keyword>
<keyword id="KW-0820">tRNA-binding</keyword>
<feature type="chain" id="PRO_1000080423" description="Small ribosomal subunit protein uS12">
    <location>
        <begin position="1"/>
        <end position="141"/>
    </location>
</feature>
<feature type="region of interest" description="Disordered" evidence="3">
    <location>
        <begin position="115"/>
        <end position="141"/>
    </location>
</feature>
<feature type="modified residue" description="3-methylthioaspartic acid" evidence="1">
    <location>
        <position position="102"/>
    </location>
</feature>